<accession>Q0SQZ5</accession>
<keyword id="KW-0066">ATP synthesis</keyword>
<keyword id="KW-0067">ATP-binding</keyword>
<keyword id="KW-1003">Cell membrane</keyword>
<keyword id="KW-0139">CF(1)</keyword>
<keyword id="KW-0375">Hydrogen ion transport</keyword>
<keyword id="KW-0406">Ion transport</keyword>
<keyword id="KW-0472">Membrane</keyword>
<keyword id="KW-0547">Nucleotide-binding</keyword>
<keyword id="KW-1278">Translocase</keyword>
<keyword id="KW-0813">Transport</keyword>
<gene>
    <name evidence="1" type="primary">atpD</name>
    <name type="ordered locus">CPR_2162</name>
</gene>
<reference key="1">
    <citation type="journal article" date="2006" name="Genome Res.">
        <title>Skewed genomic variability in strains of the toxigenic bacterial pathogen, Clostridium perfringens.</title>
        <authorList>
            <person name="Myers G.S.A."/>
            <person name="Rasko D.A."/>
            <person name="Cheung J.K."/>
            <person name="Ravel J."/>
            <person name="Seshadri R."/>
            <person name="DeBoy R.T."/>
            <person name="Ren Q."/>
            <person name="Varga J."/>
            <person name="Awad M.M."/>
            <person name="Brinkac L.M."/>
            <person name="Daugherty S.C."/>
            <person name="Haft D.H."/>
            <person name="Dodson R.J."/>
            <person name="Madupu R."/>
            <person name="Nelson W.C."/>
            <person name="Rosovitz M.J."/>
            <person name="Sullivan S.A."/>
            <person name="Khouri H."/>
            <person name="Dimitrov G.I."/>
            <person name="Watkins K.L."/>
            <person name="Mulligan S."/>
            <person name="Benton J."/>
            <person name="Radune D."/>
            <person name="Fisher D.J."/>
            <person name="Atkins H.S."/>
            <person name="Hiscox T."/>
            <person name="Jost B.H."/>
            <person name="Billington S.J."/>
            <person name="Songer J.G."/>
            <person name="McClane B.A."/>
            <person name="Titball R.W."/>
            <person name="Rood J.I."/>
            <person name="Melville S.B."/>
            <person name="Paulsen I.T."/>
        </authorList>
    </citation>
    <scope>NUCLEOTIDE SEQUENCE [LARGE SCALE GENOMIC DNA]</scope>
    <source>
        <strain>SM101 / Type A</strain>
    </source>
</reference>
<comment type="function">
    <text evidence="1">Produces ATP from ADP in the presence of a proton gradient across the membrane. The catalytic sites are hosted primarily by the beta subunits.</text>
</comment>
<comment type="catalytic activity">
    <reaction evidence="1">
        <text>ATP + H2O + 4 H(+)(in) = ADP + phosphate + 5 H(+)(out)</text>
        <dbReference type="Rhea" id="RHEA:57720"/>
        <dbReference type="ChEBI" id="CHEBI:15377"/>
        <dbReference type="ChEBI" id="CHEBI:15378"/>
        <dbReference type="ChEBI" id="CHEBI:30616"/>
        <dbReference type="ChEBI" id="CHEBI:43474"/>
        <dbReference type="ChEBI" id="CHEBI:456216"/>
        <dbReference type="EC" id="7.1.2.2"/>
    </reaction>
</comment>
<comment type="subunit">
    <text evidence="1">F-type ATPases have 2 components, CF(1) - the catalytic core - and CF(0) - the membrane proton channel. CF(1) has five subunits: alpha(3), beta(3), gamma(1), delta(1), epsilon(1). CF(0) has three main subunits: a(1), b(2) and c(9-12). The alpha and beta chains form an alternating ring which encloses part of the gamma chain. CF(1) is attached to CF(0) by a central stalk formed by the gamma and epsilon chains, while a peripheral stalk is formed by the delta and b chains.</text>
</comment>
<comment type="subcellular location">
    <subcellularLocation>
        <location evidence="1">Cell membrane</location>
        <topology evidence="1">Peripheral membrane protein</topology>
    </subcellularLocation>
</comment>
<comment type="similarity">
    <text evidence="1">Belongs to the ATPase alpha/beta chains family.</text>
</comment>
<organism>
    <name type="scientific">Clostridium perfringens (strain SM101 / Type A)</name>
    <dbReference type="NCBI Taxonomy" id="289380"/>
    <lineage>
        <taxon>Bacteria</taxon>
        <taxon>Bacillati</taxon>
        <taxon>Bacillota</taxon>
        <taxon>Clostridia</taxon>
        <taxon>Eubacteriales</taxon>
        <taxon>Clostridiaceae</taxon>
        <taxon>Clostridium</taxon>
    </lineage>
</organism>
<dbReference type="EC" id="7.1.2.2" evidence="1"/>
<dbReference type="EMBL" id="CP000312">
    <property type="protein sequence ID" value="ABG85338.1"/>
    <property type="molecule type" value="Genomic_DNA"/>
</dbReference>
<dbReference type="RefSeq" id="WP_011592982.1">
    <property type="nucleotide sequence ID" value="NC_008262.1"/>
</dbReference>
<dbReference type="SMR" id="Q0SQZ5"/>
<dbReference type="KEGG" id="cpr:CPR_2162"/>
<dbReference type="Proteomes" id="UP000001824">
    <property type="component" value="Chromosome"/>
</dbReference>
<dbReference type="GO" id="GO:0005886">
    <property type="term" value="C:plasma membrane"/>
    <property type="evidence" value="ECO:0007669"/>
    <property type="project" value="UniProtKB-SubCell"/>
</dbReference>
<dbReference type="GO" id="GO:0045259">
    <property type="term" value="C:proton-transporting ATP synthase complex"/>
    <property type="evidence" value="ECO:0007669"/>
    <property type="project" value="UniProtKB-KW"/>
</dbReference>
<dbReference type="GO" id="GO:0005524">
    <property type="term" value="F:ATP binding"/>
    <property type="evidence" value="ECO:0007669"/>
    <property type="project" value="UniProtKB-UniRule"/>
</dbReference>
<dbReference type="GO" id="GO:0016887">
    <property type="term" value="F:ATP hydrolysis activity"/>
    <property type="evidence" value="ECO:0007669"/>
    <property type="project" value="InterPro"/>
</dbReference>
<dbReference type="GO" id="GO:0046933">
    <property type="term" value="F:proton-transporting ATP synthase activity, rotational mechanism"/>
    <property type="evidence" value="ECO:0007669"/>
    <property type="project" value="UniProtKB-UniRule"/>
</dbReference>
<dbReference type="CDD" id="cd18110">
    <property type="entry name" value="ATP-synt_F1_beta_C"/>
    <property type="match status" value="1"/>
</dbReference>
<dbReference type="CDD" id="cd18115">
    <property type="entry name" value="ATP-synt_F1_beta_N"/>
    <property type="match status" value="1"/>
</dbReference>
<dbReference type="CDD" id="cd01133">
    <property type="entry name" value="F1-ATPase_beta_CD"/>
    <property type="match status" value="1"/>
</dbReference>
<dbReference type="FunFam" id="1.10.1140.10:FF:000001">
    <property type="entry name" value="ATP synthase subunit beta"/>
    <property type="match status" value="1"/>
</dbReference>
<dbReference type="FunFam" id="2.40.10.170:FF:000005">
    <property type="entry name" value="ATP synthase subunit beta"/>
    <property type="match status" value="1"/>
</dbReference>
<dbReference type="FunFam" id="3.40.50.300:FF:000004">
    <property type="entry name" value="ATP synthase subunit beta"/>
    <property type="match status" value="1"/>
</dbReference>
<dbReference type="Gene3D" id="2.40.10.170">
    <property type="match status" value="1"/>
</dbReference>
<dbReference type="Gene3D" id="1.10.1140.10">
    <property type="entry name" value="Bovine Mitochondrial F1-atpase, Atp Synthase Beta Chain, Chain D, domain 3"/>
    <property type="match status" value="1"/>
</dbReference>
<dbReference type="Gene3D" id="3.40.50.300">
    <property type="entry name" value="P-loop containing nucleotide triphosphate hydrolases"/>
    <property type="match status" value="1"/>
</dbReference>
<dbReference type="HAMAP" id="MF_01347">
    <property type="entry name" value="ATP_synth_beta_bact"/>
    <property type="match status" value="1"/>
</dbReference>
<dbReference type="InterPro" id="IPR003593">
    <property type="entry name" value="AAA+_ATPase"/>
</dbReference>
<dbReference type="InterPro" id="IPR055190">
    <property type="entry name" value="ATP-synt_VA_C"/>
</dbReference>
<dbReference type="InterPro" id="IPR005722">
    <property type="entry name" value="ATP_synth_F1_bsu"/>
</dbReference>
<dbReference type="InterPro" id="IPR020003">
    <property type="entry name" value="ATPase_a/bsu_AS"/>
</dbReference>
<dbReference type="InterPro" id="IPR050053">
    <property type="entry name" value="ATPase_alpha/beta_chains"/>
</dbReference>
<dbReference type="InterPro" id="IPR004100">
    <property type="entry name" value="ATPase_F1/V1/A1_a/bsu_N"/>
</dbReference>
<dbReference type="InterPro" id="IPR036121">
    <property type="entry name" value="ATPase_F1/V1/A1_a/bsu_N_sf"/>
</dbReference>
<dbReference type="InterPro" id="IPR000194">
    <property type="entry name" value="ATPase_F1/V1/A1_a/bsu_nucl-bd"/>
</dbReference>
<dbReference type="InterPro" id="IPR024034">
    <property type="entry name" value="ATPase_F1/V1_b/a_C"/>
</dbReference>
<dbReference type="InterPro" id="IPR027417">
    <property type="entry name" value="P-loop_NTPase"/>
</dbReference>
<dbReference type="NCBIfam" id="TIGR01039">
    <property type="entry name" value="atpD"/>
    <property type="match status" value="1"/>
</dbReference>
<dbReference type="PANTHER" id="PTHR15184">
    <property type="entry name" value="ATP SYNTHASE"/>
    <property type="match status" value="1"/>
</dbReference>
<dbReference type="PANTHER" id="PTHR15184:SF71">
    <property type="entry name" value="ATP SYNTHASE SUBUNIT BETA, MITOCHONDRIAL"/>
    <property type="match status" value="1"/>
</dbReference>
<dbReference type="Pfam" id="PF00006">
    <property type="entry name" value="ATP-synt_ab"/>
    <property type="match status" value="1"/>
</dbReference>
<dbReference type="Pfam" id="PF02874">
    <property type="entry name" value="ATP-synt_ab_N"/>
    <property type="match status" value="1"/>
</dbReference>
<dbReference type="Pfam" id="PF22919">
    <property type="entry name" value="ATP-synt_VA_C"/>
    <property type="match status" value="1"/>
</dbReference>
<dbReference type="SMART" id="SM00382">
    <property type="entry name" value="AAA"/>
    <property type="match status" value="1"/>
</dbReference>
<dbReference type="SUPFAM" id="SSF47917">
    <property type="entry name" value="C-terminal domain of alpha and beta subunits of F1 ATP synthase"/>
    <property type="match status" value="1"/>
</dbReference>
<dbReference type="SUPFAM" id="SSF50615">
    <property type="entry name" value="N-terminal domain of alpha and beta subunits of F1 ATP synthase"/>
    <property type="match status" value="1"/>
</dbReference>
<dbReference type="SUPFAM" id="SSF52540">
    <property type="entry name" value="P-loop containing nucleoside triphosphate hydrolases"/>
    <property type="match status" value="1"/>
</dbReference>
<dbReference type="PROSITE" id="PS00152">
    <property type="entry name" value="ATPASE_ALPHA_BETA"/>
    <property type="match status" value="1"/>
</dbReference>
<name>ATPB_CLOPS</name>
<protein>
    <recommendedName>
        <fullName evidence="1">ATP synthase subunit beta</fullName>
        <ecNumber evidence="1">7.1.2.2</ecNumber>
    </recommendedName>
    <alternativeName>
        <fullName evidence="1">ATP synthase F1 sector subunit beta</fullName>
    </alternativeName>
    <alternativeName>
        <fullName evidence="1">F-ATPase subunit beta</fullName>
    </alternativeName>
</protein>
<feature type="chain" id="PRO_1000055104" description="ATP synthase subunit beta">
    <location>
        <begin position="1"/>
        <end position="465"/>
    </location>
</feature>
<feature type="binding site" evidence="1">
    <location>
        <begin position="153"/>
        <end position="160"/>
    </location>
    <ligand>
        <name>ATP</name>
        <dbReference type="ChEBI" id="CHEBI:30616"/>
    </ligand>
</feature>
<sequence>MSNNIGKVVQVIGPVVDIKFANDELPNIFNAIHIKMDDGKILVCEVEQHVGDDIVRTIAMEATEGLRRGVEAVDTGAPISVPVGECVLGRIFNVLGKPLDSGAEVNNEEKYPIHRPAPSFEEQSVVPQMFETGIKVIDLLAPYQRGGKIGLFGGAGVGKTVLIQELINNIAKEHGGLSVFTGVGERSREGNDLYYEMMESGVIKNTALVFGQMNEPPGARMRVALTGLTMAEYFRDQGQDVLLFIDNIFRFSQAGSEVSALLGRIPSAVGYQPTLATEMGALQERITSTTHGSITSVQAVYVPADDLTDPAPATTFNHLDAKTVLSRSIAEIGIYPAVDPLDSSSRILDPRVVGEEHYEVASKVKHILERYKELQDIIAILGVDELADEDKLIVARARRIQKFLSQPFTVAEQFTGMQGRYVPIKETIRGFKEILEGKHDNVPESAFLFVGTIEEVLEKARTMAQ</sequence>
<proteinExistence type="inferred from homology"/>
<evidence type="ECO:0000255" key="1">
    <source>
        <dbReference type="HAMAP-Rule" id="MF_01347"/>
    </source>
</evidence>